<keyword id="KW-1185">Reference proteome</keyword>
<keyword id="KW-0687">Ribonucleoprotein</keyword>
<keyword id="KW-0689">Ribosomal protein</keyword>
<evidence type="ECO:0000255" key="1">
    <source>
        <dbReference type="HAMAP-Rule" id="MF_00294"/>
    </source>
</evidence>
<evidence type="ECO:0000305" key="2"/>
<feature type="chain" id="PRO_0000356437" description="Large ribosomal subunit protein bL33">
    <location>
        <begin position="1"/>
        <end position="49"/>
    </location>
</feature>
<dbReference type="EMBL" id="AM180355">
    <property type="protein sequence ID" value="CAJ66873.1"/>
    <property type="molecule type" value="Genomic_DNA"/>
</dbReference>
<dbReference type="RefSeq" id="WP_003421192.1">
    <property type="nucleotide sequence ID" value="NZ_JAUPES010000049.1"/>
</dbReference>
<dbReference type="RefSeq" id="YP_001086522.1">
    <property type="nucleotide sequence ID" value="NC_009089.1"/>
</dbReference>
<dbReference type="SMR" id="Q18CE3"/>
<dbReference type="STRING" id="272563.CD630_00581"/>
<dbReference type="EnsemblBacteria" id="CAJ66873">
    <property type="protein sequence ID" value="CAJ66873"/>
    <property type="gene ID" value="CD630_00581"/>
</dbReference>
<dbReference type="GeneID" id="66352556"/>
<dbReference type="KEGG" id="cdf:CD630_00581"/>
<dbReference type="KEGG" id="pdc:CDIF630_00123"/>
<dbReference type="PATRIC" id="fig|272563.120.peg.64"/>
<dbReference type="eggNOG" id="COG0267">
    <property type="taxonomic scope" value="Bacteria"/>
</dbReference>
<dbReference type="PhylomeDB" id="Q18CE3"/>
<dbReference type="BioCyc" id="PDIF272563:G12WB-112-MONOMER"/>
<dbReference type="Proteomes" id="UP000001978">
    <property type="component" value="Chromosome"/>
</dbReference>
<dbReference type="GO" id="GO:0005737">
    <property type="term" value="C:cytoplasm"/>
    <property type="evidence" value="ECO:0007669"/>
    <property type="project" value="UniProtKB-ARBA"/>
</dbReference>
<dbReference type="GO" id="GO:1990904">
    <property type="term" value="C:ribonucleoprotein complex"/>
    <property type="evidence" value="ECO:0007669"/>
    <property type="project" value="UniProtKB-KW"/>
</dbReference>
<dbReference type="GO" id="GO:0005840">
    <property type="term" value="C:ribosome"/>
    <property type="evidence" value="ECO:0007669"/>
    <property type="project" value="UniProtKB-KW"/>
</dbReference>
<dbReference type="GO" id="GO:0003735">
    <property type="term" value="F:structural constituent of ribosome"/>
    <property type="evidence" value="ECO:0007669"/>
    <property type="project" value="InterPro"/>
</dbReference>
<dbReference type="GO" id="GO:0006412">
    <property type="term" value="P:translation"/>
    <property type="evidence" value="ECO:0007669"/>
    <property type="project" value="UniProtKB-UniRule"/>
</dbReference>
<dbReference type="Gene3D" id="2.20.28.120">
    <property type="entry name" value="Ribosomal protein L33"/>
    <property type="match status" value="1"/>
</dbReference>
<dbReference type="HAMAP" id="MF_00294">
    <property type="entry name" value="Ribosomal_bL33"/>
    <property type="match status" value="1"/>
</dbReference>
<dbReference type="InterPro" id="IPR001705">
    <property type="entry name" value="Ribosomal_bL33"/>
</dbReference>
<dbReference type="InterPro" id="IPR018264">
    <property type="entry name" value="Ribosomal_bL33_CS"/>
</dbReference>
<dbReference type="InterPro" id="IPR038584">
    <property type="entry name" value="Ribosomal_bL33_sf"/>
</dbReference>
<dbReference type="InterPro" id="IPR011332">
    <property type="entry name" value="Ribosomal_zn-bd"/>
</dbReference>
<dbReference type="NCBIfam" id="NF001764">
    <property type="entry name" value="PRK00504.1"/>
    <property type="match status" value="1"/>
</dbReference>
<dbReference type="NCBIfam" id="NF001860">
    <property type="entry name" value="PRK00595.1"/>
    <property type="match status" value="1"/>
</dbReference>
<dbReference type="NCBIfam" id="TIGR01023">
    <property type="entry name" value="rpmG_bact"/>
    <property type="match status" value="1"/>
</dbReference>
<dbReference type="PANTHER" id="PTHR43168">
    <property type="entry name" value="50S RIBOSOMAL PROTEIN L33, CHLOROPLASTIC"/>
    <property type="match status" value="1"/>
</dbReference>
<dbReference type="PANTHER" id="PTHR43168:SF2">
    <property type="entry name" value="LARGE RIBOSOMAL SUBUNIT PROTEIN BL33C"/>
    <property type="match status" value="1"/>
</dbReference>
<dbReference type="Pfam" id="PF00471">
    <property type="entry name" value="Ribosomal_L33"/>
    <property type="match status" value="1"/>
</dbReference>
<dbReference type="SUPFAM" id="SSF57829">
    <property type="entry name" value="Zn-binding ribosomal proteins"/>
    <property type="match status" value="1"/>
</dbReference>
<dbReference type="PROSITE" id="PS00582">
    <property type="entry name" value="RIBOSOMAL_L33"/>
    <property type="match status" value="1"/>
</dbReference>
<accession>Q18CE3</accession>
<proteinExistence type="inferred from homology"/>
<organism>
    <name type="scientific">Clostridioides difficile (strain 630)</name>
    <name type="common">Peptoclostridium difficile</name>
    <dbReference type="NCBI Taxonomy" id="272563"/>
    <lineage>
        <taxon>Bacteria</taxon>
        <taxon>Bacillati</taxon>
        <taxon>Bacillota</taxon>
        <taxon>Clostridia</taxon>
        <taxon>Peptostreptococcales</taxon>
        <taxon>Peptostreptococcaceae</taxon>
        <taxon>Clostridioides</taxon>
    </lineage>
</organism>
<comment type="similarity">
    <text evidence="1">Belongs to the bacterial ribosomal protein bL33 family.</text>
</comment>
<protein>
    <recommendedName>
        <fullName evidence="1">Large ribosomal subunit protein bL33</fullName>
    </recommendedName>
    <alternativeName>
        <fullName evidence="2">50S ribosomal protein L33</fullName>
    </alternativeName>
</protein>
<name>RL33_CLOD6</name>
<gene>
    <name evidence="1" type="primary">rpmG</name>
    <name type="ordered locus">CD630_00581</name>
    <name type="ORF">CD0058A</name>
</gene>
<reference key="1">
    <citation type="journal article" date="2006" name="Nat. Genet.">
        <title>The multidrug-resistant human pathogen Clostridium difficile has a highly mobile, mosaic genome.</title>
        <authorList>
            <person name="Sebaihia M."/>
            <person name="Wren B.W."/>
            <person name="Mullany P."/>
            <person name="Fairweather N.F."/>
            <person name="Minton N."/>
            <person name="Stabler R."/>
            <person name="Thomson N.R."/>
            <person name="Roberts A.P."/>
            <person name="Cerdeno-Tarraga A.M."/>
            <person name="Wang H."/>
            <person name="Holden M.T.G."/>
            <person name="Wright A."/>
            <person name="Churcher C."/>
            <person name="Quail M.A."/>
            <person name="Baker S."/>
            <person name="Bason N."/>
            <person name="Brooks K."/>
            <person name="Chillingworth T."/>
            <person name="Cronin A."/>
            <person name="Davis P."/>
            <person name="Dowd L."/>
            <person name="Fraser A."/>
            <person name="Feltwell T."/>
            <person name="Hance Z."/>
            <person name="Holroyd S."/>
            <person name="Jagels K."/>
            <person name="Moule S."/>
            <person name="Mungall K."/>
            <person name="Price C."/>
            <person name="Rabbinowitsch E."/>
            <person name="Sharp S."/>
            <person name="Simmonds M."/>
            <person name="Stevens K."/>
            <person name="Unwin L."/>
            <person name="Whithead S."/>
            <person name="Dupuy B."/>
            <person name="Dougan G."/>
            <person name="Barrell B."/>
            <person name="Parkhill J."/>
        </authorList>
    </citation>
    <scope>NUCLEOTIDE SEQUENCE [LARGE SCALE GENOMIC DNA]</scope>
    <source>
        <strain>630</strain>
    </source>
</reference>
<sequence length="49" mass="5959">MRVKVTLACTECKQRNYNTTKNKKNNPDRIELQKYCRFCKKHTTHKETK</sequence>